<keyword id="KW-0325">Glycoprotein</keyword>
<keyword id="KW-0472">Membrane</keyword>
<keyword id="KW-0532">Neurotransmitter transport</keyword>
<keyword id="KW-0812">Transmembrane</keyword>
<keyword id="KW-1133">Transmembrane helix</keyword>
<keyword id="KW-0813">Transport</keyword>
<comment type="function">
    <text evidence="1">Involved in acetylcholine transport into synaptic vesicles.</text>
</comment>
<comment type="subcellular location">
    <subcellularLocation>
        <location>Membrane</location>
        <topology>Multi-pass membrane protein</topology>
    </subcellularLocation>
</comment>
<comment type="tissue specificity">
    <text evidence="4">High expression in the electric lobe of the brain.</text>
</comment>
<comment type="similarity">
    <text evidence="5">Belongs to the major facilitator superfamily. Vesicular transporter family.</text>
</comment>
<dbReference type="EMBL" id="U05339">
    <property type="protein sequence ID" value="AAC59648.1"/>
    <property type="molecule type" value="mRNA"/>
</dbReference>
<dbReference type="SMR" id="Q91514"/>
<dbReference type="GO" id="GO:0030121">
    <property type="term" value="C:AP-1 adaptor complex"/>
    <property type="evidence" value="ECO:0007669"/>
    <property type="project" value="TreeGrafter"/>
</dbReference>
<dbReference type="GO" id="GO:0030122">
    <property type="term" value="C:AP-2 adaptor complex"/>
    <property type="evidence" value="ECO:0007669"/>
    <property type="project" value="TreeGrafter"/>
</dbReference>
<dbReference type="GO" id="GO:0043195">
    <property type="term" value="C:terminal bouton"/>
    <property type="evidence" value="ECO:0007669"/>
    <property type="project" value="TreeGrafter"/>
</dbReference>
<dbReference type="GO" id="GO:0005277">
    <property type="term" value="F:acetylcholine transmembrane transporter activity"/>
    <property type="evidence" value="ECO:0007669"/>
    <property type="project" value="TreeGrafter"/>
</dbReference>
<dbReference type="GO" id="GO:0007268">
    <property type="term" value="P:chemical synaptic transmission"/>
    <property type="evidence" value="ECO:0007669"/>
    <property type="project" value="TreeGrafter"/>
</dbReference>
<dbReference type="CDD" id="cd17383">
    <property type="entry name" value="MFS_SLC18A3_VAChT"/>
    <property type="match status" value="1"/>
</dbReference>
<dbReference type="FunFam" id="1.20.1250.20:FF:000109">
    <property type="entry name" value="Putative vesicular acetylcholine transporter"/>
    <property type="match status" value="1"/>
</dbReference>
<dbReference type="Gene3D" id="1.20.1250.20">
    <property type="entry name" value="MFS general substrate transporter like domains"/>
    <property type="match status" value="1"/>
</dbReference>
<dbReference type="InterPro" id="IPR011701">
    <property type="entry name" value="MFS"/>
</dbReference>
<dbReference type="InterPro" id="IPR020846">
    <property type="entry name" value="MFS_dom"/>
</dbReference>
<dbReference type="InterPro" id="IPR036259">
    <property type="entry name" value="MFS_trans_sf"/>
</dbReference>
<dbReference type="InterPro" id="IPR050930">
    <property type="entry name" value="MFS_Vesicular_Transporter"/>
</dbReference>
<dbReference type="PANTHER" id="PTHR23506">
    <property type="entry name" value="GH10249P"/>
    <property type="match status" value="1"/>
</dbReference>
<dbReference type="PANTHER" id="PTHR23506:SF13">
    <property type="entry name" value="VESICULAR ACETYLCHOLINE TRANSPORTER"/>
    <property type="match status" value="1"/>
</dbReference>
<dbReference type="Pfam" id="PF07690">
    <property type="entry name" value="MFS_1"/>
    <property type="match status" value="1"/>
</dbReference>
<dbReference type="SUPFAM" id="SSF103473">
    <property type="entry name" value="MFS general substrate transporter"/>
    <property type="match status" value="1"/>
</dbReference>
<dbReference type="PROSITE" id="PS50850">
    <property type="entry name" value="MFS"/>
    <property type="match status" value="1"/>
</dbReference>
<accession>Q91514</accession>
<sequence length="511" mass="55648">MVVGQAKAAMGKISSAIGERSKRISGAMNEPLRKRKILLVIVCIAMLLDNMLYMVIVPIVPNYLETIRTYKLVYITIPSNGTNGSLLNSTQRAVLERNPNANEDIQIGVLFASKAILQLLSNPFTGTFIDRVGYDIPLLIGLTIMFFSTITFAFGESYAILFAARSLQGLGSAFADTSGIAMIADKYTEESERTQALGIALAFISFGSLVAPPFGGVLYQFAGKWVPFLVLSFVCLLDGILLLMVVTPFASRTRGNTLQGTPIHKLMIDPYIAVVAGALTTCNIPLAFLEPTISNWMKKTMNASEWQMGITWLPAFFPHILGVYITVKLAAKYPNYQWLYGAFGLVIIGVSSCTIPACRNFEELIIPLCALCFGIALVDTALLPTLAFLVDIRYVSVYGSVYAIADISYSVAYALGPIMAGQIVHDLGFVQLNLGMGLVNILYAPALLFLRNVCQMKPSLSERNILLEDGPKGLYDTIIMEERKAAKEPHGTSSGNHSVHAVLSDQEGYSE</sequence>
<organism>
    <name type="scientific">Torpedo torpedo</name>
    <name type="common">Common torpedo</name>
    <name type="synonym">Torpedo ocellata</name>
    <dbReference type="NCBI Taxonomy" id="30481"/>
    <lineage>
        <taxon>Eukaryota</taxon>
        <taxon>Metazoa</taxon>
        <taxon>Chordata</taxon>
        <taxon>Craniata</taxon>
        <taxon>Vertebrata</taxon>
        <taxon>Chondrichthyes</taxon>
        <taxon>Elasmobranchii</taxon>
        <taxon>Batoidea</taxon>
        <taxon>Torpediniformes</taxon>
        <taxon>Torpedinidae</taxon>
        <taxon>Torpedo</taxon>
    </lineage>
</organism>
<proteinExistence type="evidence at transcript level"/>
<name>VACHT_TORTO</name>
<feature type="chain" id="PRO_0000127524" description="Vesicular acetylcholine transporter">
    <location>
        <begin position="1"/>
        <end position="511"/>
    </location>
</feature>
<feature type="topological domain" description="Cytoplasmic" evidence="2">
    <location>
        <begin position="1"/>
        <end position="36"/>
    </location>
</feature>
<feature type="transmembrane region" description="Helical" evidence="2">
    <location>
        <begin position="37"/>
        <end position="57"/>
    </location>
</feature>
<feature type="topological domain" description="Lumenal, vesicle" evidence="2">
    <location>
        <begin position="58"/>
        <end position="108"/>
    </location>
</feature>
<feature type="transmembrane region" description="Helical" evidence="2">
    <location>
        <begin position="109"/>
        <end position="129"/>
    </location>
</feature>
<feature type="topological domain" description="Cytoplasmic" evidence="2">
    <location>
        <begin position="130"/>
        <end position="135"/>
    </location>
</feature>
<feature type="transmembrane region" description="Helical" evidence="2">
    <location>
        <begin position="136"/>
        <end position="156"/>
    </location>
</feature>
<feature type="topological domain" description="Lumenal, vesicle" evidence="2">
    <location>
        <begin position="157"/>
        <end position="165"/>
    </location>
</feature>
<feature type="transmembrane region" description="Helical" evidence="2">
    <location>
        <begin position="166"/>
        <end position="186"/>
    </location>
</feature>
<feature type="topological domain" description="Cytoplasmic" evidence="2">
    <location>
        <begin position="187"/>
        <end position="197"/>
    </location>
</feature>
<feature type="transmembrane region" description="Helical" evidence="2">
    <location>
        <begin position="198"/>
        <end position="218"/>
    </location>
</feature>
<feature type="topological domain" description="Lumenal, vesicle" evidence="2">
    <location>
        <begin position="219"/>
        <end position="225"/>
    </location>
</feature>
<feature type="transmembrane region" description="Helical" evidence="2">
    <location>
        <begin position="226"/>
        <end position="246"/>
    </location>
</feature>
<feature type="topological domain" description="Cytoplasmic" evidence="2">
    <location>
        <begin position="247"/>
        <end position="267"/>
    </location>
</feature>
<feature type="transmembrane region" description="Helical" evidence="2">
    <location>
        <begin position="268"/>
        <end position="288"/>
    </location>
</feature>
<feature type="topological domain" description="Lumenal, vesicle" evidence="2">
    <location>
        <begin position="289"/>
        <end position="306"/>
    </location>
</feature>
<feature type="transmembrane region" description="Helical" evidence="2">
    <location>
        <begin position="307"/>
        <end position="327"/>
    </location>
</feature>
<feature type="topological domain" description="Cytoplasmic" evidence="2">
    <location>
        <begin position="328"/>
        <end position="337"/>
    </location>
</feature>
<feature type="transmembrane region" description="Helical" evidence="2">
    <location>
        <begin position="338"/>
        <end position="358"/>
    </location>
</feature>
<feature type="topological domain" description="Lumenal, vesicle" evidence="2">
    <location>
        <begin position="359"/>
        <end position="363"/>
    </location>
</feature>
<feature type="transmembrane region" description="Helical" evidence="2">
    <location>
        <begin position="364"/>
        <end position="384"/>
    </location>
</feature>
<feature type="topological domain" description="Cytoplasmic" evidence="2">
    <location>
        <begin position="385"/>
        <end position="400"/>
    </location>
</feature>
<feature type="transmembrane region" description="Helical" evidence="2">
    <location>
        <begin position="401"/>
        <end position="421"/>
    </location>
</feature>
<feature type="topological domain" description="Lumenal, vesicle" evidence="2">
    <location>
        <begin position="422"/>
        <end position="428"/>
    </location>
</feature>
<feature type="transmembrane region" description="Helical" evidence="2">
    <location>
        <begin position="429"/>
        <end position="449"/>
    </location>
</feature>
<feature type="topological domain" description="Cytoplasmic" evidence="2">
    <location>
        <begin position="450"/>
        <end position="511"/>
    </location>
</feature>
<feature type="region of interest" description="Disordered" evidence="3">
    <location>
        <begin position="486"/>
        <end position="511"/>
    </location>
</feature>
<feature type="glycosylation site" description="N-linked (GlcNAc...) asparagine" evidence="2">
    <location>
        <position position="80"/>
    </location>
</feature>
<feature type="glycosylation site" description="N-linked (GlcNAc...) asparagine" evidence="2">
    <location>
        <position position="83"/>
    </location>
</feature>
<feature type="glycosylation site" description="N-linked (GlcNAc...) asparagine" evidence="2">
    <location>
        <position position="88"/>
    </location>
</feature>
<feature type="glycosylation site" description="N-linked (GlcNAc...) asparagine" evidence="2">
    <location>
        <position position="302"/>
    </location>
</feature>
<evidence type="ECO:0000250" key="1"/>
<evidence type="ECO:0000255" key="2"/>
<evidence type="ECO:0000256" key="3">
    <source>
        <dbReference type="SAM" id="MobiDB-lite"/>
    </source>
</evidence>
<evidence type="ECO:0000269" key="4">
    <source>
    </source>
</evidence>
<evidence type="ECO:0000305" key="5"/>
<reference key="1">
    <citation type="journal article" date="1994" name="FEBS Lett.">
        <title>Cloning and expression of the vesamicol binding protein from the marine ray Torpedo. Homology with the putative vesicular acetylcholine transporter UNC-17 from Caenorhabditis elegans.</title>
        <authorList>
            <person name="Varoqui H."/>
            <person name="Diebler M.-F."/>
            <person name="Meunier F.-M."/>
            <person name="Rand J.B."/>
            <person name="Usdin T.B."/>
            <person name="Bonner T.I."/>
            <person name="Eiden L.E."/>
            <person name="Erickson J.D."/>
        </authorList>
    </citation>
    <scope>NUCLEOTIDE SEQUENCE [MRNA]</scope>
    <scope>TISSUE SPECIFICITY</scope>
    <source>
        <tissue>Electric lobe</tissue>
    </source>
</reference>
<protein>
    <recommendedName>
        <fullName>Vesicular acetylcholine transporter</fullName>
        <shortName>VAChT</shortName>
    </recommendedName>
    <alternativeName>
        <fullName>Vesamicol-binding protein</fullName>
    </alternativeName>
</protein>